<gene>
    <name evidence="1" type="primary">ruvB</name>
    <name type="ordered locus">SSON_1281</name>
</gene>
<reference key="1">
    <citation type="journal article" date="2005" name="Nucleic Acids Res.">
        <title>Genome dynamics and diversity of Shigella species, the etiologic agents of bacillary dysentery.</title>
        <authorList>
            <person name="Yang F."/>
            <person name="Yang J."/>
            <person name="Zhang X."/>
            <person name="Chen L."/>
            <person name="Jiang Y."/>
            <person name="Yan Y."/>
            <person name="Tang X."/>
            <person name="Wang J."/>
            <person name="Xiong Z."/>
            <person name="Dong J."/>
            <person name="Xue Y."/>
            <person name="Zhu Y."/>
            <person name="Xu X."/>
            <person name="Sun L."/>
            <person name="Chen S."/>
            <person name="Nie H."/>
            <person name="Peng J."/>
            <person name="Xu J."/>
            <person name="Wang Y."/>
            <person name="Yuan Z."/>
            <person name="Wen Y."/>
            <person name="Yao Z."/>
            <person name="Shen Y."/>
            <person name="Qiang B."/>
            <person name="Hou Y."/>
            <person name="Yu J."/>
            <person name="Jin Q."/>
        </authorList>
    </citation>
    <scope>NUCLEOTIDE SEQUENCE [LARGE SCALE GENOMIC DNA]</scope>
    <source>
        <strain>Ss046</strain>
    </source>
</reference>
<organism>
    <name type="scientific">Shigella sonnei (strain Ss046)</name>
    <dbReference type="NCBI Taxonomy" id="300269"/>
    <lineage>
        <taxon>Bacteria</taxon>
        <taxon>Pseudomonadati</taxon>
        <taxon>Pseudomonadota</taxon>
        <taxon>Gammaproteobacteria</taxon>
        <taxon>Enterobacterales</taxon>
        <taxon>Enterobacteriaceae</taxon>
        <taxon>Shigella</taxon>
    </lineage>
</organism>
<accession>Q3Z2L8</accession>
<keyword id="KW-0067">ATP-binding</keyword>
<keyword id="KW-0963">Cytoplasm</keyword>
<keyword id="KW-0227">DNA damage</keyword>
<keyword id="KW-0233">DNA recombination</keyword>
<keyword id="KW-0234">DNA repair</keyword>
<keyword id="KW-0238">DNA-binding</keyword>
<keyword id="KW-0378">Hydrolase</keyword>
<keyword id="KW-0547">Nucleotide-binding</keyword>
<keyword id="KW-1185">Reference proteome</keyword>
<feature type="chain" id="PRO_0000235405" description="Holliday junction branch migration complex subunit RuvB">
    <location>
        <begin position="1"/>
        <end position="336"/>
    </location>
</feature>
<feature type="region of interest" description="Large ATPase domain (RuvB-L)" evidence="1">
    <location>
        <begin position="4"/>
        <end position="184"/>
    </location>
</feature>
<feature type="region of interest" description="Small ATPAse domain (RuvB-S)" evidence="1">
    <location>
        <begin position="185"/>
        <end position="255"/>
    </location>
</feature>
<feature type="region of interest" description="Head domain (RuvB-H)" evidence="1">
    <location>
        <begin position="258"/>
        <end position="336"/>
    </location>
</feature>
<feature type="binding site" evidence="1">
    <location>
        <position position="23"/>
    </location>
    <ligand>
        <name>ATP</name>
        <dbReference type="ChEBI" id="CHEBI:30616"/>
    </ligand>
</feature>
<feature type="binding site" evidence="1">
    <location>
        <position position="24"/>
    </location>
    <ligand>
        <name>ATP</name>
        <dbReference type="ChEBI" id="CHEBI:30616"/>
    </ligand>
</feature>
<feature type="binding site" evidence="1">
    <location>
        <position position="65"/>
    </location>
    <ligand>
        <name>ATP</name>
        <dbReference type="ChEBI" id="CHEBI:30616"/>
    </ligand>
</feature>
<feature type="binding site" evidence="1">
    <location>
        <position position="68"/>
    </location>
    <ligand>
        <name>ATP</name>
        <dbReference type="ChEBI" id="CHEBI:30616"/>
    </ligand>
</feature>
<feature type="binding site" evidence="1">
    <location>
        <position position="69"/>
    </location>
    <ligand>
        <name>ATP</name>
        <dbReference type="ChEBI" id="CHEBI:30616"/>
    </ligand>
</feature>
<feature type="binding site" evidence="1">
    <location>
        <position position="69"/>
    </location>
    <ligand>
        <name>Mg(2+)</name>
        <dbReference type="ChEBI" id="CHEBI:18420"/>
    </ligand>
</feature>
<feature type="binding site" evidence="1">
    <location>
        <position position="70"/>
    </location>
    <ligand>
        <name>ATP</name>
        <dbReference type="ChEBI" id="CHEBI:30616"/>
    </ligand>
</feature>
<feature type="binding site" evidence="1">
    <location>
        <begin position="131"/>
        <end position="133"/>
    </location>
    <ligand>
        <name>ATP</name>
        <dbReference type="ChEBI" id="CHEBI:30616"/>
    </ligand>
</feature>
<feature type="binding site" evidence="1">
    <location>
        <position position="174"/>
    </location>
    <ligand>
        <name>ATP</name>
        <dbReference type="ChEBI" id="CHEBI:30616"/>
    </ligand>
</feature>
<feature type="binding site" evidence="1">
    <location>
        <position position="184"/>
    </location>
    <ligand>
        <name>ATP</name>
        <dbReference type="ChEBI" id="CHEBI:30616"/>
    </ligand>
</feature>
<feature type="binding site" evidence="1">
    <location>
        <position position="221"/>
    </location>
    <ligand>
        <name>ATP</name>
        <dbReference type="ChEBI" id="CHEBI:30616"/>
    </ligand>
</feature>
<feature type="binding site" evidence="1">
    <location>
        <position position="294"/>
    </location>
    <ligand>
        <name>DNA</name>
        <dbReference type="ChEBI" id="CHEBI:16991"/>
    </ligand>
</feature>
<feature type="binding site" evidence="1">
    <location>
        <position position="313"/>
    </location>
    <ligand>
        <name>DNA</name>
        <dbReference type="ChEBI" id="CHEBI:16991"/>
    </ligand>
</feature>
<feature type="binding site" evidence="1">
    <location>
        <position position="318"/>
    </location>
    <ligand>
        <name>DNA</name>
        <dbReference type="ChEBI" id="CHEBI:16991"/>
    </ligand>
</feature>
<protein>
    <recommendedName>
        <fullName evidence="1">Holliday junction branch migration complex subunit RuvB</fullName>
        <ecNumber evidence="1">3.6.4.-</ecNumber>
    </recommendedName>
</protein>
<name>RUVB_SHISS</name>
<sequence>MIEADRLISAGTTLPEDGADRAIRPKLLEEYVGQPQVRSQMEIFIKAAKLRGDALDHLLIFGPPGLGKTTLANIVANEMGVNLRTTSGPVLEKAGDLAAMLTNLEPHDVLFIDEIHRLSPVVEEVLYPAMEDYQLDIMIGEGPAARSIKIDLPPFTLIGATTRAGSLTSPLRDRFGIVQRLEFYQVPDLQYIVSRSARFMGLEMSDDGALEVARRARGTPRIANRLLRRVRDFAEVKHDGTISADIAAQALDMLNVDAEGFDYMDRKLLLAVIDKFFGGPVGLDNLAAAIGEERETIEDVLEPYLIQQGFLQRTPRGRMATTRAWNHFGITPPEMP</sequence>
<comment type="function">
    <text evidence="1">The RuvA-RuvB-RuvC complex processes Holliday junction (HJ) DNA during genetic recombination and DNA repair, while the RuvA-RuvB complex plays an important role in the rescue of blocked DNA replication forks via replication fork reversal (RFR). RuvA specifically binds to HJ cruciform DNA, conferring on it an open structure. The RuvB hexamer acts as an ATP-dependent pump, pulling dsDNA into and through the RuvAB complex. RuvB forms 2 homohexamers on either side of HJ DNA bound by 1 or 2 RuvA tetramers; 4 subunits per hexamer contact DNA at a time. Coordinated motions by a converter formed by DNA-disengaged RuvB subunits stimulates ATP hydrolysis and nucleotide exchange. Immobilization of the converter enables RuvB to convert the ATP-contained energy into a lever motion, pulling 2 nucleotides of DNA out of the RuvA tetramer per ATP hydrolyzed, thus driving DNA branch migration. The RuvB motors rotate together with the DNA substrate, which together with the progressing nucleotide cycle form the mechanistic basis for DNA recombination by continuous HJ branch migration. Branch migration allows RuvC to scan DNA until it finds its consensus sequence, where it cleaves and resolves cruciform DNA.</text>
</comment>
<comment type="catalytic activity">
    <reaction evidence="1">
        <text>ATP + H2O = ADP + phosphate + H(+)</text>
        <dbReference type="Rhea" id="RHEA:13065"/>
        <dbReference type="ChEBI" id="CHEBI:15377"/>
        <dbReference type="ChEBI" id="CHEBI:15378"/>
        <dbReference type="ChEBI" id="CHEBI:30616"/>
        <dbReference type="ChEBI" id="CHEBI:43474"/>
        <dbReference type="ChEBI" id="CHEBI:456216"/>
    </reaction>
</comment>
<comment type="subunit">
    <text evidence="1">Homohexamer. Forms an RuvA(8)-RuvB(12)-Holliday junction (HJ) complex. HJ DNA is sandwiched between 2 RuvA tetramers; dsDNA enters through RuvA and exits via RuvB. An RuvB hexamer assembles on each DNA strand where it exits the tetramer. Each RuvB hexamer is contacted by two RuvA subunits (via domain III) on 2 adjacent RuvB subunits; this complex drives branch migration. In the full resolvosome a probable DNA-RuvA(4)-RuvB(12)-RuvC(2) complex forms which resolves the HJ.</text>
</comment>
<comment type="subcellular location">
    <subcellularLocation>
        <location evidence="1">Cytoplasm</location>
    </subcellularLocation>
</comment>
<comment type="domain">
    <text evidence="1">Has 3 domains, the large (RuvB-L) and small ATPase (RuvB-S) domains and the C-terminal head (RuvB-H) domain. The head domain binds DNA, while the ATPase domains jointly bind ATP, ADP or are empty depending on the state of the subunit in the translocation cycle. During a single DNA translocation step the structure of each domain remains the same, but their relative positions change.</text>
</comment>
<comment type="similarity">
    <text evidence="1">Belongs to the RuvB family.</text>
</comment>
<dbReference type="EC" id="3.6.4.-" evidence="1"/>
<dbReference type="EMBL" id="CP000038">
    <property type="protein sequence ID" value="AAZ87994.1"/>
    <property type="molecule type" value="Genomic_DNA"/>
</dbReference>
<dbReference type="RefSeq" id="WP_000568511.1">
    <property type="nucleotide sequence ID" value="NC_007384.1"/>
</dbReference>
<dbReference type="SMR" id="Q3Z2L8"/>
<dbReference type="GeneID" id="93776134"/>
<dbReference type="KEGG" id="ssn:SSON_1281"/>
<dbReference type="HOGENOM" id="CLU_055599_1_0_6"/>
<dbReference type="Proteomes" id="UP000002529">
    <property type="component" value="Chromosome"/>
</dbReference>
<dbReference type="GO" id="GO:0005737">
    <property type="term" value="C:cytoplasm"/>
    <property type="evidence" value="ECO:0007669"/>
    <property type="project" value="UniProtKB-SubCell"/>
</dbReference>
<dbReference type="GO" id="GO:0048476">
    <property type="term" value="C:Holliday junction resolvase complex"/>
    <property type="evidence" value="ECO:0007669"/>
    <property type="project" value="UniProtKB-UniRule"/>
</dbReference>
<dbReference type="GO" id="GO:0005524">
    <property type="term" value="F:ATP binding"/>
    <property type="evidence" value="ECO:0007669"/>
    <property type="project" value="UniProtKB-UniRule"/>
</dbReference>
<dbReference type="GO" id="GO:0016887">
    <property type="term" value="F:ATP hydrolysis activity"/>
    <property type="evidence" value="ECO:0007669"/>
    <property type="project" value="InterPro"/>
</dbReference>
<dbReference type="GO" id="GO:0000400">
    <property type="term" value="F:four-way junction DNA binding"/>
    <property type="evidence" value="ECO:0007669"/>
    <property type="project" value="UniProtKB-UniRule"/>
</dbReference>
<dbReference type="GO" id="GO:0009378">
    <property type="term" value="F:four-way junction helicase activity"/>
    <property type="evidence" value="ECO:0007669"/>
    <property type="project" value="InterPro"/>
</dbReference>
<dbReference type="GO" id="GO:0006310">
    <property type="term" value="P:DNA recombination"/>
    <property type="evidence" value="ECO:0007669"/>
    <property type="project" value="UniProtKB-UniRule"/>
</dbReference>
<dbReference type="GO" id="GO:0006281">
    <property type="term" value="P:DNA repair"/>
    <property type="evidence" value="ECO:0007669"/>
    <property type="project" value="UniProtKB-UniRule"/>
</dbReference>
<dbReference type="CDD" id="cd00009">
    <property type="entry name" value="AAA"/>
    <property type="match status" value="1"/>
</dbReference>
<dbReference type="FunFam" id="1.10.10.10:FF:000086">
    <property type="entry name" value="Holliday junction ATP-dependent DNA helicase RuvB"/>
    <property type="match status" value="1"/>
</dbReference>
<dbReference type="FunFam" id="1.10.8.60:FF:000023">
    <property type="entry name" value="Holliday junction ATP-dependent DNA helicase RuvB"/>
    <property type="match status" value="1"/>
</dbReference>
<dbReference type="FunFam" id="3.40.50.300:FF:000073">
    <property type="entry name" value="Holliday junction ATP-dependent DNA helicase RuvB"/>
    <property type="match status" value="1"/>
</dbReference>
<dbReference type="Gene3D" id="1.10.8.60">
    <property type="match status" value="1"/>
</dbReference>
<dbReference type="Gene3D" id="3.40.50.300">
    <property type="entry name" value="P-loop containing nucleotide triphosphate hydrolases"/>
    <property type="match status" value="1"/>
</dbReference>
<dbReference type="Gene3D" id="1.10.10.10">
    <property type="entry name" value="Winged helix-like DNA-binding domain superfamily/Winged helix DNA-binding domain"/>
    <property type="match status" value="1"/>
</dbReference>
<dbReference type="HAMAP" id="MF_00016">
    <property type="entry name" value="DNA_HJ_migration_RuvB"/>
    <property type="match status" value="1"/>
</dbReference>
<dbReference type="InterPro" id="IPR003593">
    <property type="entry name" value="AAA+_ATPase"/>
</dbReference>
<dbReference type="InterPro" id="IPR041445">
    <property type="entry name" value="AAA_lid_4"/>
</dbReference>
<dbReference type="InterPro" id="IPR004605">
    <property type="entry name" value="DNA_helicase_Holl-junc_RuvB"/>
</dbReference>
<dbReference type="InterPro" id="IPR027417">
    <property type="entry name" value="P-loop_NTPase"/>
</dbReference>
<dbReference type="InterPro" id="IPR008824">
    <property type="entry name" value="RuvB-like_N"/>
</dbReference>
<dbReference type="InterPro" id="IPR008823">
    <property type="entry name" value="RuvB_C"/>
</dbReference>
<dbReference type="InterPro" id="IPR036388">
    <property type="entry name" value="WH-like_DNA-bd_sf"/>
</dbReference>
<dbReference type="InterPro" id="IPR036390">
    <property type="entry name" value="WH_DNA-bd_sf"/>
</dbReference>
<dbReference type="NCBIfam" id="NF000868">
    <property type="entry name" value="PRK00080.1"/>
    <property type="match status" value="1"/>
</dbReference>
<dbReference type="NCBIfam" id="TIGR00635">
    <property type="entry name" value="ruvB"/>
    <property type="match status" value="1"/>
</dbReference>
<dbReference type="PANTHER" id="PTHR42848">
    <property type="match status" value="1"/>
</dbReference>
<dbReference type="PANTHER" id="PTHR42848:SF1">
    <property type="entry name" value="HOLLIDAY JUNCTION BRANCH MIGRATION COMPLEX SUBUNIT RUVB"/>
    <property type="match status" value="1"/>
</dbReference>
<dbReference type="Pfam" id="PF17864">
    <property type="entry name" value="AAA_lid_4"/>
    <property type="match status" value="1"/>
</dbReference>
<dbReference type="Pfam" id="PF05491">
    <property type="entry name" value="RuvB_C"/>
    <property type="match status" value="1"/>
</dbReference>
<dbReference type="Pfam" id="PF05496">
    <property type="entry name" value="RuvB_N"/>
    <property type="match status" value="1"/>
</dbReference>
<dbReference type="SMART" id="SM00382">
    <property type="entry name" value="AAA"/>
    <property type="match status" value="1"/>
</dbReference>
<dbReference type="SUPFAM" id="SSF52540">
    <property type="entry name" value="P-loop containing nucleoside triphosphate hydrolases"/>
    <property type="match status" value="1"/>
</dbReference>
<dbReference type="SUPFAM" id="SSF46785">
    <property type="entry name" value="Winged helix' DNA-binding domain"/>
    <property type="match status" value="1"/>
</dbReference>
<proteinExistence type="inferred from homology"/>
<evidence type="ECO:0000255" key="1">
    <source>
        <dbReference type="HAMAP-Rule" id="MF_00016"/>
    </source>
</evidence>